<dbReference type="EC" id="4.1.1.23"/>
<dbReference type="EMBL" id="AE016818">
    <property type="protein sequence ID" value="AAS52626.1"/>
    <property type="molecule type" value="Genomic_DNA"/>
</dbReference>
<dbReference type="RefSeq" id="NP_984802.1">
    <property type="nucleotide sequence ID" value="NM_210156.1"/>
</dbReference>
<dbReference type="SMR" id="Q757S1"/>
<dbReference type="FunCoup" id="Q757S1">
    <property type="interactions" value="1148"/>
</dbReference>
<dbReference type="STRING" id="284811.Q757S1"/>
<dbReference type="EnsemblFungi" id="AAS52626">
    <property type="protein sequence ID" value="AAS52626"/>
    <property type="gene ID" value="AGOS_AEL059W"/>
</dbReference>
<dbReference type="GeneID" id="4620994"/>
<dbReference type="KEGG" id="ago:AGOS_AEL059W"/>
<dbReference type="eggNOG" id="KOG1377">
    <property type="taxonomic scope" value="Eukaryota"/>
</dbReference>
<dbReference type="HOGENOM" id="CLU_030821_0_0_1"/>
<dbReference type="InParanoid" id="Q757S1"/>
<dbReference type="OMA" id="CLIKTHI"/>
<dbReference type="OrthoDB" id="10263753at2759"/>
<dbReference type="UniPathway" id="UPA00070">
    <property type="reaction ID" value="UER00120"/>
</dbReference>
<dbReference type="Proteomes" id="UP000000591">
    <property type="component" value="Chromosome V"/>
</dbReference>
<dbReference type="GO" id="GO:0005829">
    <property type="term" value="C:cytosol"/>
    <property type="evidence" value="ECO:0000318"/>
    <property type="project" value="GO_Central"/>
</dbReference>
<dbReference type="GO" id="GO:0004590">
    <property type="term" value="F:orotidine-5'-phosphate decarboxylase activity"/>
    <property type="evidence" value="ECO:0000318"/>
    <property type="project" value="GO_Central"/>
</dbReference>
<dbReference type="GO" id="GO:0006207">
    <property type="term" value="P:'de novo' pyrimidine nucleobase biosynthetic process"/>
    <property type="evidence" value="ECO:0000318"/>
    <property type="project" value="GO_Central"/>
</dbReference>
<dbReference type="GO" id="GO:0044205">
    <property type="term" value="P:'de novo' UMP biosynthetic process"/>
    <property type="evidence" value="ECO:0007669"/>
    <property type="project" value="UniProtKB-UniPathway"/>
</dbReference>
<dbReference type="CDD" id="cd04725">
    <property type="entry name" value="OMP_decarboxylase_like"/>
    <property type="match status" value="1"/>
</dbReference>
<dbReference type="FunFam" id="3.20.20.70:FF:000114">
    <property type="entry name" value="Decarboxylase,orotidine phosphate"/>
    <property type="match status" value="1"/>
</dbReference>
<dbReference type="Gene3D" id="3.20.20.70">
    <property type="entry name" value="Aldolase class I"/>
    <property type="match status" value="1"/>
</dbReference>
<dbReference type="InterPro" id="IPR013785">
    <property type="entry name" value="Aldolase_TIM"/>
</dbReference>
<dbReference type="InterPro" id="IPR014732">
    <property type="entry name" value="OMPdecase"/>
</dbReference>
<dbReference type="InterPro" id="IPR018089">
    <property type="entry name" value="OMPdecase_AS"/>
</dbReference>
<dbReference type="InterPro" id="IPR001754">
    <property type="entry name" value="OMPdeCOase_dom"/>
</dbReference>
<dbReference type="InterPro" id="IPR011060">
    <property type="entry name" value="RibuloseP-bd_barrel"/>
</dbReference>
<dbReference type="NCBIfam" id="TIGR01740">
    <property type="entry name" value="pyrF"/>
    <property type="match status" value="1"/>
</dbReference>
<dbReference type="PANTHER" id="PTHR19278">
    <property type="entry name" value="OROTATE PHOSPHORIBOSYLTRANSFERASE"/>
    <property type="match status" value="1"/>
</dbReference>
<dbReference type="PANTHER" id="PTHR19278:SF9">
    <property type="entry name" value="URIDINE 5'-MONOPHOSPHATE SYNTHASE"/>
    <property type="match status" value="1"/>
</dbReference>
<dbReference type="Pfam" id="PF00215">
    <property type="entry name" value="OMPdecase"/>
    <property type="match status" value="1"/>
</dbReference>
<dbReference type="SMART" id="SM00934">
    <property type="entry name" value="OMPdecase"/>
    <property type="match status" value="1"/>
</dbReference>
<dbReference type="SUPFAM" id="SSF51366">
    <property type="entry name" value="Ribulose-phoshate binding barrel"/>
    <property type="match status" value="1"/>
</dbReference>
<dbReference type="PROSITE" id="PS00156">
    <property type="entry name" value="OMPDECASE"/>
    <property type="match status" value="1"/>
</dbReference>
<organism>
    <name type="scientific">Eremothecium gossypii (strain ATCC 10895 / CBS 109.51 / FGSC 9923 / NRRL Y-1056)</name>
    <name type="common">Yeast</name>
    <name type="synonym">Ashbya gossypii</name>
    <dbReference type="NCBI Taxonomy" id="284811"/>
    <lineage>
        <taxon>Eukaryota</taxon>
        <taxon>Fungi</taxon>
        <taxon>Dikarya</taxon>
        <taxon>Ascomycota</taxon>
        <taxon>Saccharomycotina</taxon>
        <taxon>Saccharomycetes</taxon>
        <taxon>Saccharomycetales</taxon>
        <taxon>Saccharomycetaceae</taxon>
        <taxon>Eremothecium</taxon>
    </lineage>
</organism>
<feature type="chain" id="PRO_0000134639" description="Orotidine 5'-phosphate decarboxylase">
    <location>
        <begin position="1"/>
        <end position="267"/>
    </location>
</feature>
<feature type="active site" description="Proton donor" evidence="2">
    <location>
        <position position="93"/>
    </location>
</feature>
<feature type="binding site" evidence="1">
    <location>
        <position position="37"/>
    </location>
    <ligand>
        <name>substrate</name>
    </ligand>
</feature>
<feature type="binding site" evidence="1">
    <location>
        <begin position="59"/>
        <end position="61"/>
    </location>
    <ligand>
        <name>substrate</name>
    </ligand>
</feature>
<feature type="binding site" evidence="1">
    <location>
        <begin position="91"/>
        <end position="100"/>
    </location>
    <ligand>
        <name>substrate</name>
    </ligand>
</feature>
<feature type="binding site" evidence="1">
    <location>
        <position position="217"/>
    </location>
    <ligand>
        <name>substrate</name>
    </ligand>
</feature>
<feature type="binding site" evidence="1">
    <location>
        <position position="235"/>
    </location>
    <ligand>
        <name>substrate</name>
    </ligand>
</feature>
<gene>
    <name type="primary">URA3</name>
    <name type="ordered locus">AEL059W</name>
</gene>
<proteinExistence type="inferred from homology"/>
<comment type="catalytic activity">
    <reaction evidence="2">
        <text>orotidine 5'-phosphate + H(+) = UMP + CO2</text>
        <dbReference type="Rhea" id="RHEA:11596"/>
        <dbReference type="ChEBI" id="CHEBI:15378"/>
        <dbReference type="ChEBI" id="CHEBI:16526"/>
        <dbReference type="ChEBI" id="CHEBI:57538"/>
        <dbReference type="ChEBI" id="CHEBI:57865"/>
        <dbReference type="EC" id="4.1.1.23"/>
    </reaction>
</comment>
<comment type="pathway">
    <text>Pyrimidine metabolism; UMP biosynthesis via de novo pathway; UMP from orotate: step 2/2.</text>
</comment>
<comment type="similarity">
    <text evidence="3">Belongs to the OMP decarboxylase family.</text>
</comment>
<accession>Q757S1</accession>
<name>PYRF_EREGS</name>
<reference key="1">
    <citation type="journal article" date="2004" name="Science">
        <title>The Ashbya gossypii genome as a tool for mapping the ancient Saccharomyces cerevisiae genome.</title>
        <authorList>
            <person name="Dietrich F.S."/>
            <person name="Voegeli S."/>
            <person name="Brachat S."/>
            <person name="Lerch A."/>
            <person name="Gates K."/>
            <person name="Steiner S."/>
            <person name="Mohr C."/>
            <person name="Poehlmann R."/>
            <person name="Luedi P."/>
            <person name="Choi S."/>
            <person name="Wing R.A."/>
            <person name="Flavier A."/>
            <person name="Gaffney T.D."/>
            <person name="Philippsen P."/>
        </authorList>
    </citation>
    <scope>NUCLEOTIDE SEQUENCE [LARGE SCALE GENOMIC DNA]</scope>
    <source>
        <strain>ATCC 10895 / CBS 109.51 / FGSC 9923 / NRRL Y-1056</strain>
    </source>
</reference>
<reference key="2">
    <citation type="journal article" date="2013" name="G3 (Bethesda)">
        <title>Genomes of Ashbya fungi isolated from insects reveal four mating-type loci, numerous translocations, lack of transposons, and distinct gene duplications.</title>
        <authorList>
            <person name="Dietrich F.S."/>
            <person name="Voegeli S."/>
            <person name="Kuo S."/>
            <person name="Philippsen P."/>
        </authorList>
    </citation>
    <scope>GENOME REANNOTATION</scope>
    <source>
        <strain>ATCC 10895 / CBS 109.51 / FGSC 9923 / NRRL Y-1056</strain>
    </source>
</reference>
<evidence type="ECO:0000250" key="1"/>
<evidence type="ECO:0000255" key="2">
    <source>
        <dbReference type="PROSITE-ProRule" id="PRU10110"/>
    </source>
</evidence>
<evidence type="ECO:0000305" key="3"/>
<protein>
    <recommendedName>
        <fullName>Orotidine 5'-phosphate decarboxylase</fullName>
        <ecNumber>4.1.1.23</ecNumber>
    </recommendedName>
    <alternativeName>
        <fullName>OMP decarboxylase</fullName>
        <shortName>OMPDCase</shortName>
        <shortName>OMPdecase</shortName>
    </alternativeName>
    <alternativeName>
        <fullName>Uridine 5'-monophosphate synthase</fullName>
        <shortName>UMP synthase</shortName>
    </alternativeName>
</protein>
<sequence length="267" mass="29210">MSTKSYAERAKAHNSPVARKLLALMHEKKTNLCASLDVRTSRKLLELADTLGPHICLLKTHVDILTDFDIETTVKPLQQLAAKHNFMIFEDRKFADIGNTVKLQYSSGVYRIAEWADITNAHGVTGPGVIAGLKEAAKLASQEPRGLLMLAELSSQGSLARGDYTAGVVEMAKLDKDFVIGFIAQRDMGGRADGFDWLIMTPGVGLDDKGDGLGQQYRTVDEVVSDGTDVIIVGRGLFDKGRDPNVEGARYRKAGWEAYLRRIGETS</sequence>
<keyword id="KW-0210">Decarboxylase</keyword>
<keyword id="KW-0456">Lyase</keyword>
<keyword id="KW-0665">Pyrimidine biosynthesis</keyword>
<keyword id="KW-1185">Reference proteome</keyword>